<comment type="function">
    <text evidence="1">Plays a role in the inhibition of host immune repsonse by counteracting the action of interferons on early events in the viral replication cycle.</text>
</comment>
<comment type="subunit">
    <text evidence="1">Interacts with components of host SCF complex CUL1 and SKP1 and components of the cullin deneddylation/COP9 signalosome complex subunits COPS7A and COPS7B.</text>
</comment>
<comment type="induction">
    <text evidence="1">Expressed in the early phase of the viral replicative cycle.</text>
</comment>
<comment type="similarity">
    <text evidence="2">Belongs to the orthopoxvirus OPG025 family.</text>
</comment>
<reference key="1">
    <citation type="journal article" date="1990" name="Virology">
        <title>The complete DNA sequence of vaccinia virus.</title>
        <authorList>
            <person name="Goebel S.J."/>
            <person name="Johnson G.P."/>
            <person name="Perkus M.E."/>
            <person name="Davis S.W."/>
            <person name="Winslow J.P."/>
            <person name="Paoletti E."/>
        </authorList>
    </citation>
    <scope>NUCLEOTIDE SEQUENCE [LARGE SCALE GENOMIC DNA]</scope>
</reference>
<protein>
    <recommendedName>
        <fullName>Ankyrin repeat protein OPG025</fullName>
    </recommendedName>
</protein>
<evidence type="ECO:0000250" key="1">
    <source>
        <dbReference type="UniProtKB" id="P17372"/>
    </source>
</evidence>
<evidence type="ECO:0000305" key="2"/>
<organism>
    <name type="scientific">Vaccinia virus (strain Copenhagen)</name>
    <name type="common">VACV</name>
    <dbReference type="NCBI Taxonomy" id="10249"/>
    <lineage>
        <taxon>Viruses</taxon>
        <taxon>Varidnaviria</taxon>
        <taxon>Bamfordvirae</taxon>
        <taxon>Nucleocytoviricota</taxon>
        <taxon>Pokkesviricetes</taxon>
        <taxon>Chitovirales</taxon>
        <taxon>Poxviridae</taxon>
        <taxon>Chordopoxvirinae</taxon>
        <taxon>Orthopoxvirus</taxon>
        <taxon>Vaccinia virus</taxon>
    </lineage>
</organism>
<sequence>MVNDKILYDSCKTFNIDASSAQSLIESGANPLYEYDGETPLKAYVTKKNNNIKNDVVILLLSSVDYKNINDFDIFEYLCSDNIDIDLLKLLISKGIEINSIKNGINIVEKYATTSNPNVDVFKLLLDKGIPTCSNIQYGYKIKIEQIRRAGEYYNWDDELDDYDYDYTTDYDDRMGKTVLYYYIITRSQDGYATSLDVINYLISHKKEMRYYTYREHTTLYYYLDKCDIKREIFDALFDSNYSGHELMNILSNYLRKQFRKKNHKIDNYIVDQLLFDRDTFYILELCNSLRNNILISTILKRYTVSIQDLLLEYVSYHTVYINVIKCMIDEGATLYRFKHINKYFQKFGNRDPKVVEYILKNGNLVVDNDNDDNLINIMPLFPTFSMRELDVLSILKLCKPYIDDINKIDKHGCSILYHCIKSHSVSLVEWLIDNGADINIITKYGFTCITICVILADKYIPEIAELYIKILEIILSKLPTIECIKKTVDYLDDHRYLFIGGNNKSLLKICIKYFILVDYKYTCSMYPSYIEFITDCEKEIADMRQIKINGTDMLTVMYMLNKPTKKRYVNNPIFTDWANKQYKFYNQIIYNANKLIEQSKKIDDMIEEVSIDDNRLSTLPLEIRHLIFSYAFL</sequence>
<name>PG025_VACCC</name>
<feature type="chain" id="PRO_0000067093" description="Ankyrin repeat protein OPG025">
    <location>
        <begin position="1"/>
        <end position="634"/>
    </location>
</feature>
<feature type="repeat" description="ANK 1">
    <location>
        <begin position="36"/>
        <end position="69"/>
    </location>
</feature>
<feature type="repeat" description="ANK 2">
    <location>
        <begin position="70"/>
        <end position="100"/>
    </location>
</feature>
<feature type="repeat" description="ANK 3">
    <location>
        <begin position="103"/>
        <end position="134"/>
    </location>
</feature>
<feature type="repeat" description="ANK 4">
    <location>
        <begin position="175"/>
        <end position="211"/>
    </location>
</feature>
<feature type="repeat" description="ANK 5">
    <location>
        <begin position="307"/>
        <end position="337"/>
    </location>
</feature>
<feature type="repeat" description="ANK 6">
    <location>
        <begin position="412"/>
        <end position="441"/>
    </location>
</feature>
<keyword id="KW-0040">ANK repeat</keyword>
<keyword id="KW-0244">Early protein</keyword>
<keyword id="KW-0945">Host-virus interaction</keyword>
<keyword id="KW-1090">Inhibition of host innate immune response by virus</keyword>
<keyword id="KW-1185">Reference proteome</keyword>
<keyword id="KW-0677">Repeat</keyword>
<keyword id="KW-0899">Viral immunoevasion</keyword>
<accession>P21042</accession>
<proteinExistence type="inferred from homology"/>
<dbReference type="EMBL" id="M35027">
    <property type="protein sequence ID" value="AAA47988.1"/>
    <property type="molecule type" value="Genomic_DNA"/>
</dbReference>
<dbReference type="PIR" id="E42503">
    <property type="entry name" value="E42503"/>
</dbReference>
<dbReference type="SMR" id="P21042"/>
<dbReference type="Proteomes" id="UP000008269">
    <property type="component" value="Segment"/>
</dbReference>
<dbReference type="GO" id="GO:0003723">
    <property type="term" value="F:RNA binding"/>
    <property type="evidence" value="ECO:0007669"/>
    <property type="project" value="InterPro"/>
</dbReference>
<dbReference type="GO" id="GO:0052170">
    <property type="term" value="P:symbiont-mediated suppression of host innate immune response"/>
    <property type="evidence" value="ECO:0007669"/>
    <property type="project" value="UniProtKB-KW"/>
</dbReference>
<dbReference type="FunFam" id="1.25.40.20:FF:000990">
    <property type="entry name" value="Ankyrin repeat protein C9L"/>
    <property type="match status" value="1"/>
</dbReference>
<dbReference type="Gene3D" id="1.25.40.20">
    <property type="entry name" value="Ankyrin repeat-containing domain"/>
    <property type="match status" value="2"/>
</dbReference>
<dbReference type="InterPro" id="IPR051637">
    <property type="entry name" value="Ank_repeat_dom-contain_49"/>
</dbReference>
<dbReference type="InterPro" id="IPR002110">
    <property type="entry name" value="Ankyrin_rpt"/>
</dbReference>
<dbReference type="InterPro" id="IPR036770">
    <property type="entry name" value="Ankyrin_rpt-contain_sf"/>
</dbReference>
<dbReference type="InterPro" id="IPR001313">
    <property type="entry name" value="Pumilio_RNA-bd_rpt"/>
</dbReference>
<dbReference type="PANTHER" id="PTHR24180">
    <property type="entry name" value="CYCLIN-DEPENDENT KINASE INHIBITOR 2C-RELATED"/>
    <property type="match status" value="1"/>
</dbReference>
<dbReference type="PANTHER" id="PTHR24180:SF45">
    <property type="entry name" value="POLY [ADP-RIBOSE] POLYMERASE TANKYRASE"/>
    <property type="match status" value="1"/>
</dbReference>
<dbReference type="Pfam" id="PF13637">
    <property type="entry name" value="Ank_4"/>
    <property type="match status" value="1"/>
</dbReference>
<dbReference type="SMART" id="SM00248">
    <property type="entry name" value="ANK"/>
    <property type="match status" value="7"/>
</dbReference>
<dbReference type="SMART" id="SM00025">
    <property type="entry name" value="Pumilio"/>
    <property type="match status" value="2"/>
</dbReference>
<dbReference type="SUPFAM" id="SSF48403">
    <property type="entry name" value="Ankyrin repeat"/>
    <property type="match status" value="1"/>
</dbReference>
<dbReference type="PROSITE" id="PS50297">
    <property type="entry name" value="ANK_REP_REGION"/>
    <property type="match status" value="1"/>
</dbReference>
<dbReference type="PROSITE" id="PS50088">
    <property type="entry name" value="ANK_REPEAT"/>
    <property type="match status" value="1"/>
</dbReference>
<gene>
    <name type="primary">OPG025</name>
    <name type="synonym">C9L</name>
</gene>
<organismHost>
    <name type="scientific">Homo sapiens</name>
    <name type="common">Human</name>
    <dbReference type="NCBI Taxonomy" id="9606"/>
</organismHost>